<reference key="1">
    <citation type="journal article" date="2009" name="J. Bacteriol.">
        <title>Genome sequence of Azotobacter vinelandii, an obligate aerobe specialized to support diverse anaerobic metabolic processes.</title>
        <authorList>
            <person name="Setubal J.C."/>
            <person name="Dos Santos P."/>
            <person name="Goldman B.S."/>
            <person name="Ertesvaag H."/>
            <person name="Espin G."/>
            <person name="Rubio L.M."/>
            <person name="Valla S."/>
            <person name="Almeida N.F."/>
            <person name="Balasubramanian D."/>
            <person name="Cromes L."/>
            <person name="Curatti L."/>
            <person name="Du Z."/>
            <person name="Godsy E."/>
            <person name="Goodner B."/>
            <person name="Hellner-Burris K."/>
            <person name="Hernandez J.A."/>
            <person name="Houmiel K."/>
            <person name="Imperial J."/>
            <person name="Kennedy C."/>
            <person name="Larson T.J."/>
            <person name="Latreille P."/>
            <person name="Ligon L.S."/>
            <person name="Lu J."/>
            <person name="Maerk M."/>
            <person name="Miller N.M."/>
            <person name="Norton S."/>
            <person name="O'Carroll I.P."/>
            <person name="Paulsen I."/>
            <person name="Raulfs E.C."/>
            <person name="Roemer R."/>
            <person name="Rosser J."/>
            <person name="Segura D."/>
            <person name="Slater S."/>
            <person name="Stricklin S.L."/>
            <person name="Studholme D.J."/>
            <person name="Sun J."/>
            <person name="Viana C.J."/>
            <person name="Wallin E."/>
            <person name="Wang B."/>
            <person name="Wheeler C."/>
            <person name="Zhu H."/>
            <person name="Dean D.R."/>
            <person name="Dixon R."/>
            <person name="Wood D."/>
        </authorList>
    </citation>
    <scope>NUCLEOTIDE SEQUENCE [LARGE SCALE GENOMIC DNA]</scope>
    <source>
        <strain>DJ / ATCC BAA-1303</strain>
    </source>
</reference>
<accession>C1DKZ1</accession>
<sequence length="207" mass="23147">MRLFRVLLLSAVAFALSPAQADERSIQRLTQLLDRAQTLTARFSQLSLDGSGTQLQETSGEMALKRPGLFRWHTDAPQEQLLVSNGKTVWLYDPDLEQVTVRSLDQRLTHTPALLLSGDLSKIGENFEITHKEAGGVVDFILKPKSKDTLFDNLRLSFRDGVVNDMQLIDGVGQRTNILFFGVKMNQSLDAAQFDFKVPEGTDVIQE</sequence>
<comment type="function">
    <text evidence="1">Participates in the translocation of lipoproteins from the inner membrane to the outer membrane. Only forms a complex with a lipoprotein if the residue after the N-terminal Cys is not an aspartate (The Asp acts as a targeting signal to indicate that the lipoprotein should stay in the inner membrane).</text>
</comment>
<comment type="subunit">
    <text evidence="1">Monomer.</text>
</comment>
<comment type="subcellular location">
    <subcellularLocation>
        <location evidence="1">Periplasm</location>
    </subcellularLocation>
</comment>
<comment type="similarity">
    <text evidence="1">Belongs to the LolA family.</text>
</comment>
<feature type="signal peptide" evidence="1">
    <location>
        <begin position="1"/>
        <end position="21"/>
    </location>
</feature>
<feature type="chain" id="PRO_1000204466" description="Outer-membrane lipoprotein carrier protein">
    <location>
        <begin position="22"/>
        <end position="207"/>
    </location>
</feature>
<name>LOLA_AZOVD</name>
<keyword id="KW-0143">Chaperone</keyword>
<keyword id="KW-0574">Periplasm</keyword>
<keyword id="KW-0653">Protein transport</keyword>
<keyword id="KW-0732">Signal</keyword>
<keyword id="KW-0813">Transport</keyword>
<gene>
    <name evidence="1" type="primary">lolA</name>
    <name type="ordered locus">Avin_28210</name>
</gene>
<dbReference type="EMBL" id="CP001157">
    <property type="protein sequence ID" value="ACO78993.1"/>
    <property type="molecule type" value="Genomic_DNA"/>
</dbReference>
<dbReference type="RefSeq" id="WP_012701381.1">
    <property type="nucleotide sequence ID" value="NC_012560.1"/>
</dbReference>
<dbReference type="SMR" id="C1DKZ1"/>
<dbReference type="STRING" id="322710.Avin_28210"/>
<dbReference type="EnsemblBacteria" id="ACO78993">
    <property type="protein sequence ID" value="ACO78993"/>
    <property type="gene ID" value="Avin_28210"/>
</dbReference>
<dbReference type="GeneID" id="88185939"/>
<dbReference type="KEGG" id="avn:Avin_28210"/>
<dbReference type="eggNOG" id="COG2834">
    <property type="taxonomic scope" value="Bacteria"/>
</dbReference>
<dbReference type="HOGENOM" id="CLU_087560_0_0_6"/>
<dbReference type="OrthoDB" id="9787361at2"/>
<dbReference type="Proteomes" id="UP000002424">
    <property type="component" value="Chromosome"/>
</dbReference>
<dbReference type="GO" id="GO:0030288">
    <property type="term" value="C:outer membrane-bounded periplasmic space"/>
    <property type="evidence" value="ECO:0007669"/>
    <property type="project" value="TreeGrafter"/>
</dbReference>
<dbReference type="GO" id="GO:0044874">
    <property type="term" value="P:lipoprotein localization to outer membrane"/>
    <property type="evidence" value="ECO:0007669"/>
    <property type="project" value="UniProtKB-UniRule"/>
</dbReference>
<dbReference type="GO" id="GO:0042953">
    <property type="term" value="P:lipoprotein transport"/>
    <property type="evidence" value="ECO:0007669"/>
    <property type="project" value="InterPro"/>
</dbReference>
<dbReference type="CDD" id="cd16325">
    <property type="entry name" value="LolA"/>
    <property type="match status" value="1"/>
</dbReference>
<dbReference type="Gene3D" id="2.50.20.10">
    <property type="entry name" value="Lipoprotein localisation LolA/LolB/LppX"/>
    <property type="match status" value="1"/>
</dbReference>
<dbReference type="HAMAP" id="MF_00240">
    <property type="entry name" value="LolA"/>
    <property type="match status" value="1"/>
</dbReference>
<dbReference type="InterPro" id="IPR029046">
    <property type="entry name" value="LolA/LolB/LppX"/>
</dbReference>
<dbReference type="InterPro" id="IPR004564">
    <property type="entry name" value="OM_lipoprot_carrier_LolA-like"/>
</dbReference>
<dbReference type="InterPro" id="IPR018323">
    <property type="entry name" value="OM_lipoprot_carrier_LolA_Pbac"/>
</dbReference>
<dbReference type="NCBIfam" id="TIGR00547">
    <property type="entry name" value="lolA"/>
    <property type="match status" value="1"/>
</dbReference>
<dbReference type="PANTHER" id="PTHR35869">
    <property type="entry name" value="OUTER-MEMBRANE LIPOPROTEIN CARRIER PROTEIN"/>
    <property type="match status" value="1"/>
</dbReference>
<dbReference type="PANTHER" id="PTHR35869:SF1">
    <property type="entry name" value="OUTER-MEMBRANE LIPOPROTEIN CARRIER PROTEIN"/>
    <property type="match status" value="1"/>
</dbReference>
<dbReference type="Pfam" id="PF03548">
    <property type="entry name" value="LolA"/>
    <property type="match status" value="1"/>
</dbReference>
<dbReference type="SUPFAM" id="SSF89392">
    <property type="entry name" value="Prokaryotic lipoproteins and lipoprotein localization factors"/>
    <property type="match status" value="1"/>
</dbReference>
<protein>
    <recommendedName>
        <fullName evidence="1">Outer-membrane lipoprotein carrier protein</fullName>
    </recommendedName>
</protein>
<proteinExistence type="inferred from homology"/>
<organism>
    <name type="scientific">Azotobacter vinelandii (strain DJ / ATCC BAA-1303)</name>
    <dbReference type="NCBI Taxonomy" id="322710"/>
    <lineage>
        <taxon>Bacteria</taxon>
        <taxon>Pseudomonadati</taxon>
        <taxon>Pseudomonadota</taxon>
        <taxon>Gammaproteobacteria</taxon>
        <taxon>Pseudomonadales</taxon>
        <taxon>Pseudomonadaceae</taxon>
        <taxon>Azotobacter</taxon>
    </lineage>
</organism>
<evidence type="ECO:0000255" key="1">
    <source>
        <dbReference type="HAMAP-Rule" id="MF_00240"/>
    </source>
</evidence>